<name>GSKIP_BOVIN</name>
<feature type="chain" id="PRO_0000359874" description="GSK3B-interacting protein">
    <location>
        <begin position="1"/>
        <end position="139"/>
    </location>
</feature>
<feature type="region of interest" description="Required for PRKAR2A interaction; contributes to a protective effect against H(2)O(2)-induced apoptosis" evidence="2">
    <location>
        <begin position="41"/>
        <end position="45"/>
    </location>
</feature>
<feature type="region of interest" description="Interaction with GSK3B and acts as a GSK3B inhibitor" evidence="2">
    <location>
        <begin position="115"/>
        <end position="139"/>
    </location>
</feature>
<feature type="site" description="Required for GSK3B interaction; contributes to a protective effect against H(2)O(2)-induced apoptosis" evidence="2">
    <location>
        <position position="130"/>
    </location>
</feature>
<proteinExistence type="evidence at transcript level"/>
<organism>
    <name type="scientific">Bos taurus</name>
    <name type="common">Bovine</name>
    <dbReference type="NCBI Taxonomy" id="9913"/>
    <lineage>
        <taxon>Eukaryota</taxon>
        <taxon>Metazoa</taxon>
        <taxon>Chordata</taxon>
        <taxon>Craniata</taxon>
        <taxon>Vertebrata</taxon>
        <taxon>Euteleostomi</taxon>
        <taxon>Mammalia</taxon>
        <taxon>Eutheria</taxon>
        <taxon>Laurasiatheria</taxon>
        <taxon>Artiodactyla</taxon>
        <taxon>Ruminantia</taxon>
        <taxon>Pecora</taxon>
        <taxon>Bovidae</taxon>
        <taxon>Bovinae</taxon>
        <taxon>Bos</taxon>
    </lineage>
</organism>
<dbReference type="EMBL" id="BC120306">
    <property type="protein sequence ID" value="AAI20307.1"/>
    <property type="molecule type" value="mRNA"/>
</dbReference>
<dbReference type="RefSeq" id="NP_001071524.1">
    <property type="nucleotide sequence ID" value="NM_001078056.1"/>
</dbReference>
<dbReference type="RefSeq" id="XP_005222300.1">
    <property type="nucleotide sequence ID" value="XM_005222243.5"/>
</dbReference>
<dbReference type="RefSeq" id="XP_005222301.1">
    <property type="nucleotide sequence ID" value="XM_005222244.3"/>
</dbReference>
<dbReference type="RefSeq" id="XP_059735159.1">
    <property type="nucleotide sequence ID" value="XM_059879176.1"/>
</dbReference>
<dbReference type="SMR" id="Q0P5A3"/>
<dbReference type="FunCoup" id="Q0P5A3">
    <property type="interactions" value="1257"/>
</dbReference>
<dbReference type="STRING" id="9913.ENSBTAP00000026427"/>
<dbReference type="PaxDb" id="9913-ENSBTAP00000026427"/>
<dbReference type="Ensembl" id="ENSBTAT00000026427.6">
    <property type="protein sequence ID" value="ENSBTAP00000026427.5"/>
    <property type="gene ID" value="ENSBTAG00000019836.7"/>
</dbReference>
<dbReference type="GeneID" id="616052"/>
<dbReference type="KEGG" id="bta:616052"/>
<dbReference type="CTD" id="51527"/>
<dbReference type="VEuPathDB" id="HostDB:ENSBTAG00000019836"/>
<dbReference type="VGNC" id="VGNC:29679">
    <property type="gene designation" value="GSKIP"/>
</dbReference>
<dbReference type="eggNOG" id="KOG3965">
    <property type="taxonomic scope" value="Eukaryota"/>
</dbReference>
<dbReference type="GeneTree" id="ENSGT00390000009517"/>
<dbReference type="HOGENOM" id="CLU_143747_0_0_1"/>
<dbReference type="InParanoid" id="Q0P5A3"/>
<dbReference type="OMA" id="FAVTEMH"/>
<dbReference type="OrthoDB" id="5804279at2759"/>
<dbReference type="TreeFam" id="TF313906"/>
<dbReference type="Proteomes" id="UP000009136">
    <property type="component" value="Chromosome 21"/>
</dbReference>
<dbReference type="Bgee" id="ENSBTAG00000019836">
    <property type="expression patterns" value="Expressed in semen and 105 other cell types or tissues"/>
</dbReference>
<dbReference type="GO" id="GO:0005737">
    <property type="term" value="C:cytoplasm"/>
    <property type="evidence" value="ECO:0000250"/>
    <property type="project" value="UniProtKB"/>
</dbReference>
<dbReference type="GO" id="GO:0005634">
    <property type="term" value="C:nucleus"/>
    <property type="evidence" value="ECO:0000250"/>
    <property type="project" value="UniProtKB"/>
</dbReference>
<dbReference type="GO" id="GO:0019207">
    <property type="term" value="F:kinase regulator activity"/>
    <property type="evidence" value="ECO:0000318"/>
    <property type="project" value="GO_Central"/>
</dbReference>
<dbReference type="GO" id="GO:0051018">
    <property type="term" value="F:protein kinase A binding"/>
    <property type="evidence" value="ECO:0000318"/>
    <property type="project" value="GO_Central"/>
</dbReference>
<dbReference type="GO" id="GO:0004860">
    <property type="term" value="F:protein kinase inhibitor activity"/>
    <property type="evidence" value="ECO:0000250"/>
    <property type="project" value="UniProtKB"/>
</dbReference>
<dbReference type="GO" id="GO:0008631">
    <property type="term" value="P:intrinsic apoptotic signaling pathway in response to oxidative stress"/>
    <property type="evidence" value="ECO:0000250"/>
    <property type="project" value="UniProtKB"/>
</dbReference>
<dbReference type="GO" id="GO:0006469">
    <property type="term" value="P:negative regulation of protein kinase activity"/>
    <property type="evidence" value="ECO:0000250"/>
    <property type="project" value="UniProtKB"/>
</dbReference>
<dbReference type="GO" id="GO:0090263">
    <property type="term" value="P:positive regulation of canonical Wnt signaling pathway"/>
    <property type="evidence" value="ECO:0000250"/>
    <property type="project" value="UniProtKB"/>
</dbReference>
<dbReference type="GO" id="GO:0030111">
    <property type="term" value="P:regulation of Wnt signaling pathway"/>
    <property type="evidence" value="ECO:0000250"/>
    <property type="project" value="UniProtKB"/>
</dbReference>
<dbReference type="FunFam" id="3.30.2280.10:FF:000003">
    <property type="entry name" value="GSK3-beta interaction protein"/>
    <property type="match status" value="1"/>
</dbReference>
<dbReference type="Gene3D" id="3.30.2280.10">
    <property type="entry name" value="Hypothetical protein (hspc210)"/>
    <property type="match status" value="1"/>
</dbReference>
<dbReference type="InterPro" id="IPR037395">
    <property type="entry name" value="GSKIP"/>
</dbReference>
<dbReference type="InterPro" id="IPR007967">
    <property type="entry name" value="GSKIP_dom"/>
</dbReference>
<dbReference type="InterPro" id="IPR023231">
    <property type="entry name" value="GSKIP_dom_sf"/>
</dbReference>
<dbReference type="PANTHER" id="PTHR12490">
    <property type="entry name" value="GSK3B-INTERACTING PROTEIN"/>
    <property type="match status" value="1"/>
</dbReference>
<dbReference type="PANTHER" id="PTHR12490:SF4">
    <property type="entry name" value="GSK3B-INTERACTING PROTEIN"/>
    <property type="match status" value="1"/>
</dbReference>
<dbReference type="Pfam" id="PF05303">
    <property type="entry name" value="GSKIP_dom"/>
    <property type="match status" value="1"/>
</dbReference>
<dbReference type="SUPFAM" id="SSF103107">
    <property type="entry name" value="Hypothetical protein c14orf129, hspc210"/>
    <property type="match status" value="1"/>
</dbReference>
<reference key="1">
    <citation type="submission" date="2006-08" db="EMBL/GenBank/DDBJ databases">
        <authorList>
            <consortium name="NIH - Mammalian Gene Collection (MGC) project"/>
        </authorList>
    </citation>
    <scope>NUCLEOTIDE SEQUENCE [LARGE SCALE MRNA]</scope>
    <source>
        <strain>Hereford</strain>
        <tissue>Hippocampus</tissue>
    </source>
</reference>
<protein>
    <recommendedName>
        <fullName evidence="2">GSK3B-interacting protein</fullName>
        <shortName evidence="2">GSKIP</shortName>
    </recommendedName>
</protein>
<accession>Q0P5A3</accession>
<evidence type="ECO:0000250" key="1">
    <source>
        <dbReference type="UniProtKB" id="Q8BGR8"/>
    </source>
</evidence>
<evidence type="ECO:0000250" key="2">
    <source>
        <dbReference type="UniProtKB" id="Q9P0R6"/>
    </source>
</evidence>
<evidence type="ECO:0000305" key="3"/>
<sequence>METDCNPMELSGVSGFEEEAELNGFEGTDMKDMRLEAEAVVNDVLFAVNTMFVSKTLRCADDVAYINVETRERNRYCLELTEAGLRVVGYAFDQVDDHLQTPYHETVYSLLDTLSPAYREAFGNALLQRLEALKREGQS</sequence>
<comment type="function">
    <text evidence="1 2">A-kinase anchoring protein for GSK3B and PKA that regulates or facilitates their kinase activity towards their targets. The ternary complex enhances Wnt-induced signaling by facilitating the GSK3B- and PKA-induced phosphorylation of beta-catenin leading to beta-catenin degradation and stabilization respectively. Upon cAMP activation, the ternary complex contributes to neuroprotection against oxidative stress-induced apoptosis by facilitating the PKA-induced phosphorylation of DML1 and PKA-induced inactivation of GSK3B. During neurite outgrowth promotes neuron proliferation; while increases beta-catenin-induced transcriptional activity through GSK3B kinase activity inhibition, reduces N-cadherin level to promote cell cycle progression (By similarity). May play a role in cleft palate formation and is required for postnatal life through modulation of the activity of GSK3B during development (By similarity).</text>
</comment>
<comment type="subunit">
    <text evidence="2">Forms a complex composed of PRKAR2A or PRKAR2B, GSK3B and GSKIP through GSKIP interaction; facilitates PKA-induced phosphorylation of GSK3B leading to GSK3B inactivation; recruits DNM1L through GSK3B for PKA-mediated phosphorylation of DNM1L; promotes beta-catenin degradation through GSK3B-induced phosphorylation of beta-catenin; stabilizes beta-catenin and enhances Wnt-induced signaling through PKA-induced phosphorylation of beta-catenin. Interacts with GSK3B; induces GSK3B-mediated phosphorylation of GSKIP and inhibits GSK3B kinase activity.</text>
</comment>
<comment type="subcellular location">
    <subcellularLocation>
        <location evidence="2">Cytoplasm</location>
    </subcellularLocation>
    <subcellularLocation>
        <location evidence="2">Nucleus</location>
    </subcellularLocation>
</comment>
<comment type="PTM">
    <text evidence="2">Phosphorylated by GSK3B.</text>
</comment>
<comment type="similarity">
    <text evidence="3">Belongs to the GSKIP family.</text>
</comment>
<keyword id="KW-0963">Cytoplasm</keyword>
<keyword id="KW-0539">Nucleus</keyword>
<keyword id="KW-1185">Reference proteome</keyword>
<gene>
    <name evidence="2" type="primary">GSKIP</name>
</gene>